<organism>
    <name type="scientific">Caenorhabditis elegans</name>
    <dbReference type="NCBI Taxonomy" id="6239"/>
    <lineage>
        <taxon>Eukaryota</taxon>
        <taxon>Metazoa</taxon>
        <taxon>Ecdysozoa</taxon>
        <taxon>Nematoda</taxon>
        <taxon>Chromadorea</taxon>
        <taxon>Rhabditida</taxon>
        <taxon>Rhabditina</taxon>
        <taxon>Rhabditomorpha</taxon>
        <taxon>Rhabditoidea</taxon>
        <taxon>Rhabditidae</taxon>
        <taxon>Peloderinae</taxon>
        <taxon>Caenorhabditis</taxon>
    </lineage>
</organism>
<gene>
    <name type="primary">nola-3</name>
    <name type="ORF">C25A1.6</name>
</gene>
<accession>Q9XVR8</accession>
<evidence type="ECO:0000250" key="1"/>
<evidence type="ECO:0000305" key="2"/>
<reference key="1">
    <citation type="journal article" date="1998" name="Science">
        <title>Genome sequence of the nematode C. elegans: a platform for investigating biology.</title>
        <authorList>
            <consortium name="The C. elegans sequencing consortium"/>
        </authorList>
    </citation>
    <scope>NUCLEOTIDE SEQUENCE [LARGE SCALE GENOMIC DNA]</scope>
    <source>
        <strain>Bristol N2</strain>
    </source>
</reference>
<comment type="function">
    <text evidence="1">Required for ribosome biogenesis. Part of a complex which catalyzes pseudouridylation of rRNA. This involves the isomerization of uridine such that the ribose is subsequently attached to C5, instead of the normal N1. Pseudouridine ('psi') residues may serve to stabilize the conformation of rRNAs (By similarity).</text>
</comment>
<comment type="subunit">
    <text evidence="1">Component of the small nucleolar ribonucleoprotein particles containing H/ACA-type snoRNAs (H/ACA snoRNPs).</text>
</comment>
<comment type="subcellular location">
    <subcellularLocation>
        <location evidence="1">Nucleus</location>
        <location evidence="1">Nucleolus</location>
    </subcellularLocation>
</comment>
<comment type="similarity">
    <text evidence="2">Belongs to the NOP10 family.</text>
</comment>
<keyword id="KW-0539">Nucleus</keyword>
<keyword id="KW-1185">Reference proteome</keyword>
<keyword id="KW-0687">Ribonucleoprotein</keyword>
<keyword id="KW-0690">Ribosome biogenesis</keyword>
<keyword id="KW-0698">rRNA processing</keyword>
<name>NOP10_CAEEL</name>
<feature type="chain" id="PRO_0000149004" description="Putative H/ACA ribonucleoprotein complex subunit 3">
    <location>
        <begin position="1"/>
        <end position="64"/>
    </location>
</feature>
<sequence>MFLRYFLDENQQRVYTLKRTAPSGEQTLTAHPARFSPEDKNSKYRIIIKKRFGLLPTQKAKTVC</sequence>
<proteinExistence type="inferred from homology"/>
<protein>
    <recommendedName>
        <fullName>Putative H/ACA ribonucleoprotein complex subunit 3</fullName>
    </recommendedName>
    <alternativeName>
        <fullName>Nucleolar protein 10</fullName>
    </alternativeName>
    <alternativeName>
        <fullName>Nucleolus associated protein homolog 3</fullName>
    </alternativeName>
</protein>
<dbReference type="EMBL" id="Z81038">
    <property type="protein sequence ID" value="CAB02768.2"/>
    <property type="molecule type" value="Genomic_DNA"/>
</dbReference>
<dbReference type="PIR" id="T19444">
    <property type="entry name" value="T19444"/>
</dbReference>
<dbReference type="RefSeq" id="NP_492679.1">
    <property type="nucleotide sequence ID" value="NM_060278.9"/>
</dbReference>
<dbReference type="SMR" id="Q9XVR8"/>
<dbReference type="BioGRID" id="38302">
    <property type="interactions" value="14"/>
</dbReference>
<dbReference type="FunCoup" id="Q9XVR8">
    <property type="interactions" value="2345"/>
</dbReference>
<dbReference type="IntAct" id="Q9XVR8">
    <property type="interactions" value="1"/>
</dbReference>
<dbReference type="STRING" id="6239.C25A1.6.1"/>
<dbReference type="PaxDb" id="6239-C25A1.6"/>
<dbReference type="PeptideAtlas" id="Q9XVR8"/>
<dbReference type="EnsemblMetazoa" id="C25A1.6.1">
    <property type="protein sequence ID" value="C25A1.6.1"/>
    <property type="gene ID" value="WBGene00007708"/>
</dbReference>
<dbReference type="GeneID" id="172883"/>
<dbReference type="KEGG" id="cel:CELE_C25A1.6"/>
<dbReference type="UCSC" id="C25A1.6.1">
    <property type="organism name" value="c. elegans"/>
</dbReference>
<dbReference type="AGR" id="WB:WBGene00007708"/>
<dbReference type="CTD" id="172883"/>
<dbReference type="WormBase" id="C25A1.6">
    <property type="protein sequence ID" value="CE27803"/>
    <property type="gene ID" value="WBGene00007708"/>
    <property type="gene designation" value="nola-3"/>
</dbReference>
<dbReference type="eggNOG" id="KOG3503">
    <property type="taxonomic scope" value="Eukaryota"/>
</dbReference>
<dbReference type="GeneTree" id="ENSGT00390000012563"/>
<dbReference type="HOGENOM" id="CLU_184680_1_0_1"/>
<dbReference type="InParanoid" id="Q9XVR8"/>
<dbReference type="OMA" id="HRIIIKK"/>
<dbReference type="PhylomeDB" id="Q9XVR8"/>
<dbReference type="PRO" id="PR:Q9XVR8"/>
<dbReference type="Proteomes" id="UP000001940">
    <property type="component" value="Chromosome I"/>
</dbReference>
<dbReference type="Bgee" id="WBGene00007708">
    <property type="expression patterns" value="Expressed in larva"/>
</dbReference>
<dbReference type="GO" id="GO:0031429">
    <property type="term" value="C:box H/ACA snoRNP complex"/>
    <property type="evidence" value="ECO:0000318"/>
    <property type="project" value="GO_Central"/>
</dbReference>
<dbReference type="GO" id="GO:0030515">
    <property type="term" value="F:snoRNA binding"/>
    <property type="evidence" value="ECO:0007669"/>
    <property type="project" value="InterPro"/>
</dbReference>
<dbReference type="GO" id="GO:0070034">
    <property type="term" value="F:telomerase RNA binding"/>
    <property type="evidence" value="ECO:0000318"/>
    <property type="project" value="GO_Central"/>
</dbReference>
<dbReference type="GO" id="GO:0031118">
    <property type="term" value="P:rRNA pseudouridine synthesis"/>
    <property type="evidence" value="ECO:0000318"/>
    <property type="project" value="GO_Central"/>
</dbReference>
<dbReference type="GO" id="GO:0031120">
    <property type="term" value="P:snRNA pseudouridine synthesis"/>
    <property type="evidence" value="ECO:0000318"/>
    <property type="project" value="GO_Central"/>
</dbReference>
<dbReference type="FunFam" id="2.20.28.40:FF:000003">
    <property type="entry name" value="H/ACA ribonucleoprotein complex subunit 3"/>
    <property type="match status" value="1"/>
</dbReference>
<dbReference type="Gene3D" id="2.20.28.40">
    <property type="entry name" value="H/ACA ribonucleoprotein complex, subunit Nop10"/>
    <property type="match status" value="1"/>
</dbReference>
<dbReference type="InterPro" id="IPR007264">
    <property type="entry name" value="H/ACA_rnp_Nop10"/>
</dbReference>
<dbReference type="InterPro" id="IPR036756">
    <property type="entry name" value="H/ACA_rnp_Nop10_sf"/>
</dbReference>
<dbReference type="PANTHER" id="PTHR13305:SF0">
    <property type="entry name" value="H_ACA RIBONUCLEOPROTEIN COMPLEX SUBUNIT 3"/>
    <property type="match status" value="1"/>
</dbReference>
<dbReference type="PANTHER" id="PTHR13305">
    <property type="entry name" value="RIBOSOME BIOGENESIS PROTEIN NOP10"/>
    <property type="match status" value="1"/>
</dbReference>
<dbReference type="Pfam" id="PF04135">
    <property type="entry name" value="Nop10p"/>
    <property type="match status" value="1"/>
</dbReference>
<dbReference type="SUPFAM" id="SSF144210">
    <property type="entry name" value="Nop10-like SnoRNP"/>
    <property type="match status" value="1"/>
</dbReference>